<protein>
    <recommendedName>
        <fullName evidence="1">ATP-dependent Clp protease ATP-binding subunit ClpX</fullName>
    </recommendedName>
</protein>
<name>CLPX_JANMA</name>
<reference key="1">
    <citation type="journal article" date="2007" name="PLoS Genet.">
        <title>Genome analysis of Minibacterium massiliensis highlights the convergent evolution of water-living bacteria.</title>
        <authorList>
            <person name="Audic S."/>
            <person name="Robert C."/>
            <person name="Campagna B."/>
            <person name="Parinello H."/>
            <person name="Claverie J.-M."/>
            <person name="Raoult D."/>
            <person name="Drancourt M."/>
        </authorList>
    </citation>
    <scope>NUCLEOTIDE SEQUENCE [LARGE SCALE GENOMIC DNA]</scope>
    <source>
        <strain>Marseille</strain>
    </source>
</reference>
<comment type="function">
    <text evidence="1">ATP-dependent specificity component of the Clp protease. It directs the protease to specific substrates. Can perform chaperone functions in the absence of ClpP.</text>
</comment>
<comment type="subunit">
    <text evidence="1">Component of the ClpX-ClpP complex. Forms a hexameric ring that, in the presence of ATP, binds to fourteen ClpP subunits assembled into a disk-like structure with a central cavity, resembling the structure of eukaryotic proteasomes.</text>
</comment>
<comment type="similarity">
    <text evidence="1">Belongs to the ClpX chaperone family.</text>
</comment>
<sequence length="422" mass="46200">MSEKKSSSGEKLLYCSFCGKSQHEVKKLIAGPSVFICDECIDLCNDIIRDEASSVETVAGPRTDLPTPQELCELLDQYVIGQNPAKRILSVAVYNHYKRLKHLGKKDDVELAKSNILLVGPTGSGKTLLAQTLARTLDVPFVIADATTLTEAGYVGEDVENIIQKLLQNCNYEVERAQKGIVYIDEIDKISRKSDNPSITRDVSGEGVQQALLKLIEGTMASVPPQGGRKHPNQDFVQIDTTNIMFICGGAFDGLAKIISERSEKSGIGFSASVKSREERTASQVMMDTEPEDLIKFGLIPELVGRLPVVATLRELDEEALIQILLEPKNALIKQYSKLLQMEGAELEIRPAALQAIAKKAIARKTGARGLRSILEHALLDVMFELPNEQNVAKVVIDEGTINHGAKPLLIYHEQAKVSGAK</sequence>
<organism>
    <name type="scientific">Janthinobacterium sp. (strain Marseille)</name>
    <name type="common">Minibacterium massiliensis</name>
    <dbReference type="NCBI Taxonomy" id="375286"/>
    <lineage>
        <taxon>Bacteria</taxon>
        <taxon>Pseudomonadati</taxon>
        <taxon>Pseudomonadota</taxon>
        <taxon>Betaproteobacteria</taxon>
        <taxon>Burkholderiales</taxon>
        <taxon>Oxalobacteraceae</taxon>
        <taxon>Janthinobacterium</taxon>
    </lineage>
</organism>
<feature type="chain" id="PRO_1000024567" description="ATP-dependent Clp protease ATP-binding subunit ClpX">
    <location>
        <begin position="1"/>
        <end position="422"/>
    </location>
</feature>
<feature type="domain" description="ClpX-type ZB" evidence="2">
    <location>
        <begin position="2"/>
        <end position="56"/>
    </location>
</feature>
<feature type="binding site" evidence="2">
    <location>
        <position position="15"/>
    </location>
    <ligand>
        <name>Zn(2+)</name>
        <dbReference type="ChEBI" id="CHEBI:29105"/>
    </ligand>
</feature>
<feature type="binding site" evidence="2">
    <location>
        <position position="18"/>
    </location>
    <ligand>
        <name>Zn(2+)</name>
        <dbReference type="ChEBI" id="CHEBI:29105"/>
    </ligand>
</feature>
<feature type="binding site" evidence="2">
    <location>
        <position position="37"/>
    </location>
    <ligand>
        <name>Zn(2+)</name>
        <dbReference type="ChEBI" id="CHEBI:29105"/>
    </ligand>
</feature>
<feature type="binding site" evidence="2">
    <location>
        <position position="40"/>
    </location>
    <ligand>
        <name>Zn(2+)</name>
        <dbReference type="ChEBI" id="CHEBI:29105"/>
    </ligand>
</feature>
<feature type="binding site" evidence="1">
    <location>
        <begin position="121"/>
        <end position="128"/>
    </location>
    <ligand>
        <name>ATP</name>
        <dbReference type="ChEBI" id="CHEBI:30616"/>
    </ligand>
</feature>
<keyword id="KW-0067">ATP-binding</keyword>
<keyword id="KW-0143">Chaperone</keyword>
<keyword id="KW-0479">Metal-binding</keyword>
<keyword id="KW-0547">Nucleotide-binding</keyword>
<keyword id="KW-0862">Zinc</keyword>
<gene>
    <name evidence="1" type="primary">clpX</name>
    <name type="ordered locus">mma_1532</name>
</gene>
<dbReference type="EMBL" id="CP000269">
    <property type="protein sequence ID" value="ABR89187.1"/>
    <property type="molecule type" value="Genomic_DNA"/>
</dbReference>
<dbReference type="RefSeq" id="WP_012079387.1">
    <property type="nucleotide sequence ID" value="NC_009659.1"/>
</dbReference>
<dbReference type="SMR" id="A6SY75"/>
<dbReference type="STRING" id="375286.mma_1532"/>
<dbReference type="KEGG" id="mms:mma_1532"/>
<dbReference type="eggNOG" id="COG1219">
    <property type="taxonomic scope" value="Bacteria"/>
</dbReference>
<dbReference type="HOGENOM" id="CLU_014218_8_2_4"/>
<dbReference type="OrthoDB" id="9804062at2"/>
<dbReference type="Proteomes" id="UP000006388">
    <property type="component" value="Chromosome"/>
</dbReference>
<dbReference type="GO" id="GO:0009376">
    <property type="term" value="C:HslUV protease complex"/>
    <property type="evidence" value="ECO:0007669"/>
    <property type="project" value="TreeGrafter"/>
</dbReference>
<dbReference type="GO" id="GO:0005524">
    <property type="term" value="F:ATP binding"/>
    <property type="evidence" value="ECO:0007669"/>
    <property type="project" value="UniProtKB-UniRule"/>
</dbReference>
<dbReference type="GO" id="GO:0016887">
    <property type="term" value="F:ATP hydrolysis activity"/>
    <property type="evidence" value="ECO:0007669"/>
    <property type="project" value="InterPro"/>
</dbReference>
<dbReference type="GO" id="GO:0140662">
    <property type="term" value="F:ATP-dependent protein folding chaperone"/>
    <property type="evidence" value="ECO:0007669"/>
    <property type="project" value="InterPro"/>
</dbReference>
<dbReference type="GO" id="GO:0046983">
    <property type="term" value="F:protein dimerization activity"/>
    <property type="evidence" value="ECO:0007669"/>
    <property type="project" value="InterPro"/>
</dbReference>
<dbReference type="GO" id="GO:0051082">
    <property type="term" value="F:unfolded protein binding"/>
    <property type="evidence" value="ECO:0007669"/>
    <property type="project" value="UniProtKB-UniRule"/>
</dbReference>
<dbReference type="GO" id="GO:0008270">
    <property type="term" value="F:zinc ion binding"/>
    <property type="evidence" value="ECO:0007669"/>
    <property type="project" value="InterPro"/>
</dbReference>
<dbReference type="GO" id="GO:0051301">
    <property type="term" value="P:cell division"/>
    <property type="evidence" value="ECO:0007669"/>
    <property type="project" value="TreeGrafter"/>
</dbReference>
<dbReference type="GO" id="GO:0051603">
    <property type="term" value="P:proteolysis involved in protein catabolic process"/>
    <property type="evidence" value="ECO:0007669"/>
    <property type="project" value="TreeGrafter"/>
</dbReference>
<dbReference type="CDD" id="cd19497">
    <property type="entry name" value="RecA-like_ClpX"/>
    <property type="match status" value="1"/>
</dbReference>
<dbReference type="FunFam" id="1.10.8.60:FF:000002">
    <property type="entry name" value="ATP-dependent Clp protease ATP-binding subunit ClpX"/>
    <property type="match status" value="1"/>
</dbReference>
<dbReference type="FunFam" id="3.40.50.300:FF:000005">
    <property type="entry name" value="ATP-dependent Clp protease ATP-binding subunit ClpX"/>
    <property type="match status" value="1"/>
</dbReference>
<dbReference type="Gene3D" id="1.10.8.60">
    <property type="match status" value="1"/>
</dbReference>
<dbReference type="Gene3D" id="6.20.220.10">
    <property type="entry name" value="ClpX chaperone, C4-type zinc finger domain"/>
    <property type="match status" value="1"/>
</dbReference>
<dbReference type="Gene3D" id="3.40.50.300">
    <property type="entry name" value="P-loop containing nucleotide triphosphate hydrolases"/>
    <property type="match status" value="1"/>
</dbReference>
<dbReference type="HAMAP" id="MF_00175">
    <property type="entry name" value="ClpX"/>
    <property type="match status" value="1"/>
</dbReference>
<dbReference type="InterPro" id="IPR003593">
    <property type="entry name" value="AAA+_ATPase"/>
</dbReference>
<dbReference type="InterPro" id="IPR050052">
    <property type="entry name" value="ATP-dep_Clp_protease_ClpX"/>
</dbReference>
<dbReference type="InterPro" id="IPR003959">
    <property type="entry name" value="ATPase_AAA_core"/>
</dbReference>
<dbReference type="InterPro" id="IPR019489">
    <property type="entry name" value="Clp_ATPase_C"/>
</dbReference>
<dbReference type="InterPro" id="IPR004487">
    <property type="entry name" value="Clp_protease_ATP-bd_su_ClpX"/>
</dbReference>
<dbReference type="InterPro" id="IPR046425">
    <property type="entry name" value="ClpX_bact"/>
</dbReference>
<dbReference type="InterPro" id="IPR027417">
    <property type="entry name" value="P-loop_NTPase"/>
</dbReference>
<dbReference type="InterPro" id="IPR010603">
    <property type="entry name" value="Znf_CppX_C4"/>
</dbReference>
<dbReference type="InterPro" id="IPR038366">
    <property type="entry name" value="Znf_CppX_C4_sf"/>
</dbReference>
<dbReference type="NCBIfam" id="TIGR00382">
    <property type="entry name" value="clpX"/>
    <property type="match status" value="1"/>
</dbReference>
<dbReference type="NCBIfam" id="NF003745">
    <property type="entry name" value="PRK05342.1"/>
    <property type="match status" value="1"/>
</dbReference>
<dbReference type="PANTHER" id="PTHR48102:SF7">
    <property type="entry name" value="ATP-DEPENDENT CLP PROTEASE ATP-BINDING SUBUNIT CLPX-LIKE, MITOCHONDRIAL"/>
    <property type="match status" value="1"/>
</dbReference>
<dbReference type="PANTHER" id="PTHR48102">
    <property type="entry name" value="ATP-DEPENDENT CLP PROTEASE ATP-BINDING SUBUNIT CLPX-LIKE, MITOCHONDRIAL-RELATED"/>
    <property type="match status" value="1"/>
</dbReference>
<dbReference type="Pfam" id="PF07724">
    <property type="entry name" value="AAA_2"/>
    <property type="match status" value="1"/>
</dbReference>
<dbReference type="Pfam" id="PF10431">
    <property type="entry name" value="ClpB_D2-small"/>
    <property type="match status" value="1"/>
</dbReference>
<dbReference type="Pfam" id="PF06689">
    <property type="entry name" value="zf-C4_ClpX"/>
    <property type="match status" value="1"/>
</dbReference>
<dbReference type="SMART" id="SM00382">
    <property type="entry name" value="AAA"/>
    <property type="match status" value="1"/>
</dbReference>
<dbReference type="SMART" id="SM01086">
    <property type="entry name" value="ClpB_D2-small"/>
    <property type="match status" value="1"/>
</dbReference>
<dbReference type="SMART" id="SM00994">
    <property type="entry name" value="zf-C4_ClpX"/>
    <property type="match status" value="1"/>
</dbReference>
<dbReference type="SUPFAM" id="SSF57716">
    <property type="entry name" value="Glucocorticoid receptor-like (DNA-binding domain)"/>
    <property type="match status" value="1"/>
</dbReference>
<dbReference type="SUPFAM" id="SSF52540">
    <property type="entry name" value="P-loop containing nucleoside triphosphate hydrolases"/>
    <property type="match status" value="1"/>
</dbReference>
<dbReference type="PROSITE" id="PS51902">
    <property type="entry name" value="CLPX_ZB"/>
    <property type="match status" value="1"/>
</dbReference>
<evidence type="ECO:0000255" key="1">
    <source>
        <dbReference type="HAMAP-Rule" id="MF_00175"/>
    </source>
</evidence>
<evidence type="ECO:0000255" key="2">
    <source>
        <dbReference type="PROSITE-ProRule" id="PRU01250"/>
    </source>
</evidence>
<proteinExistence type="inferred from homology"/>
<accession>A6SY75</accession>